<comment type="function">
    <text>Functions as a redox protein with a potential of -325 mV.</text>
</comment>
<comment type="cofactor">
    <cofactor>
        <name>FMN</name>
        <dbReference type="ChEBI" id="CHEBI:58210"/>
    </cofactor>
</comment>
<comment type="subunit">
    <text>Monomer and homodimer.</text>
</comment>
<comment type="subcellular location">
    <subcellularLocation>
        <location>Cytoplasm</location>
    </subcellularLocation>
</comment>
<protein>
    <recommendedName>
        <fullName>FMN-binding protein</fullName>
    </recommendedName>
</protein>
<gene>
    <name type="ordered locus">DvMF_2023</name>
</gene>
<keyword id="KW-0002">3D-structure</keyword>
<keyword id="KW-0963">Cytoplasm</keyword>
<keyword id="KW-0903">Direct protein sequencing</keyword>
<keyword id="KW-0249">Electron transport</keyword>
<keyword id="KW-0285">Flavoprotein</keyword>
<keyword id="KW-0288">FMN</keyword>
<keyword id="KW-0813">Transport</keyword>
<accession>Q46604</accession>
<accession>B8DML0</accession>
<evidence type="ECO:0000305" key="1"/>
<evidence type="ECO:0007829" key="2">
    <source>
        <dbReference type="PDB" id="1AXJ"/>
    </source>
</evidence>
<evidence type="ECO:0007829" key="3">
    <source>
        <dbReference type="PDB" id="3A6R"/>
    </source>
</evidence>
<name>FMNB_NITV9</name>
<feature type="chain" id="PRO_0000087315" description="FMN-binding protein">
    <location>
        <begin position="1"/>
        <end position="122"/>
    </location>
</feature>
<feature type="sequence conflict" description="In Ref. 1; AA sequence." evidence="1" ref="1">
    <original>I</original>
    <variation>Y</variation>
    <location>
        <position position="101"/>
    </location>
</feature>
<feature type="helix" evidence="3">
    <location>
        <begin position="4"/>
        <end position="9"/>
    </location>
</feature>
<feature type="strand" evidence="3">
    <location>
        <begin position="15"/>
        <end position="21"/>
    </location>
</feature>
<feature type="strand" evidence="3">
    <location>
        <begin position="23"/>
        <end position="32"/>
    </location>
</feature>
<feature type="helix" evidence="3">
    <location>
        <begin position="33"/>
        <end position="35"/>
    </location>
</feature>
<feature type="strand" evidence="3">
    <location>
        <begin position="37"/>
        <end position="39"/>
    </location>
</feature>
<feature type="turn" evidence="3">
    <location>
        <begin position="40"/>
        <end position="42"/>
    </location>
</feature>
<feature type="strand" evidence="3">
    <location>
        <begin position="43"/>
        <end position="50"/>
    </location>
</feature>
<feature type="helix" evidence="3">
    <location>
        <begin position="52"/>
        <end position="60"/>
    </location>
</feature>
<feature type="strand" evidence="3">
    <location>
        <begin position="63"/>
        <end position="74"/>
    </location>
</feature>
<feature type="strand" evidence="3">
    <location>
        <begin position="76"/>
        <end position="95"/>
    </location>
</feature>
<feature type="helix" evidence="3">
    <location>
        <begin position="96"/>
        <end position="99"/>
    </location>
</feature>
<feature type="turn" evidence="3">
    <location>
        <begin position="100"/>
        <end position="103"/>
    </location>
</feature>
<feature type="strand" evidence="2">
    <location>
        <begin position="104"/>
        <end position="106"/>
    </location>
</feature>
<feature type="strand" evidence="3">
    <location>
        <begin position="108"/>
        <end position="120"/>
    </location>
</feature>
<sequence>MLPGTFFEVLKNEGVVAIATQGEDGPHLVNTWNSYLKVLDGNRIVVPVGGMHKTEANVARDERVLMTLGSRKVAGRNGPGTGFLIRGSAAFRTDGPEFEAIARFKWARAALVITVVSAEQTL</sequence>
<organism>
    <name type="scientific">Nitratidesulfovibrio vulgaris (strain DSM 19637 / Miyazaki F)</name>
    <name type="common">Desulfovibrio vulgaris</name>
    <dbReference type="NCBI Taxonomy" id="883"/>
    <lineage>
        <taxon>Bacteria</taxon>
        <taxon>Pseudomonadati</taxon>
        <taxon>Thermodesulfobacteriota</taxon>
        <taxon>Desulfovibrionia</taxon>
        <taxon>Desulfovibrionales</taxon>
        <taxon>Desulfovibrionaceae</taxon>
        <taxon>Nitratidesulfovibrio</taxon>
    </lineage>
</organism>
<proteinExistence type="evidence at protein level"/>
<reference key="1">
    <citation type="journal article" date="1994" name="J. Biol. Chem.">
        <title>Novel FMN-binding protein from Desulfovibrio vulgaris (Miyazaki F). Cloning and expression of its gene in Escherichia coli.</title>
        <authorList>
            <person name="Kitamura M."/>
            <person name="Kojima S."/>
            <person name="Ogasawara K."/>
            <person name="Nakaya T."/>
            <person name="Sagara T."/>
            <person name="Niki K."/>
            <person name="Miura K."/>
            <person name="Akutsu H."/>
            <person name="Kumagai I."/>
        </authorList>
    </citation>
    <scope>NUCLEOTIDE SEQUENCE [GENOMIC DNA]</scope>
    <scope>PARTIAL PROTEIN SEQUENCE</scope>
</reference>
<reference key="2">
    <citation type="submission" date="2008-10" db="EMBL/GenBank/DDBJ databases">
        <title>Complete sequence of Desulfovibrio vulgaris str. 'Miyazaki F'.</title>
        <authorList>
            <person name="Lucas S."/>
            <person name="Copeland A."/>
            <person name="Lapidus A."/>
            <person name="Glavina del Rio T."/>
            <person name="Dalin E."/>
            <person name="Tice H."/>
            <person name="Bruce D."/>
            <person name="Goodwin L."/>
            <person name="Pitluck S."/>
            <person name="Sims D."/>
            <person name="Brettin T."/>
            <person name="Detter J.C."/>
            <person name="Han C."/>
            <person name="Larimer F."/>
            <person name="Land M."/>
            <person name="Hauser L."/>
            <person name="Kyrpides N."/>
            <person name="Mikhailova N."/>
            <person name="Hazen T.C."/>
            <person name="Richardson P."/>
        </authorList>
    </citation>
    <scope>NUCLEOTIDE SEQUENCE [LARGE SCALE GENOMIC DNA]</scope>
    <source>
        <strain>DSM 19637 / Miyazaki F</strain>
    </source>
</reference>
<reference key="3">
    <citation type="journal article" date="1997" name="Nat. Struct. Biol.">
        <title>Pathway of chymotrypsin evolution suggested by the structure of the FMN-binding protein from Desulfovibrio vulgaris (Miyazaki F).</title>
        <authorList>
            <person name="Liepinsh E."/>
            <person name="Kitamura M."/>
            <person name="Murakami T."/>
            <person name="Nakaya T."/>
            <person name="Otting G."/>
        </authorList>
    </citation>
    <scope>STRUCTURE BY NMR</scope>
    <scope>SEQUENCE REVISION TO 101</scope>
</reference>
<reference key="4">
    <citation type="journal article" date="2000" name="Acta Crystallogr. D">
        <title>How do the X-ray structure and the NMR structure of FMN-binding protein differ?</title>
        <authorList>
            <person name="Suto K."/>
            <person name="Kawagoe K."/>
            <person name="Shibata N."/>
            <person name="Morimoto Y."/>
            <person name="Higuchi Y."/>
            <person name="Kitamura M."/>
            <person name="Nakaya T."/>
            <person name="Yasuoka N."/>
        </authorList>
    </citation>
    <scope>X-RAY CRYSTALLOGRAPHY (1.3 ANGSTROMS)</scope>
</reference>
<dbReference type="EMBL" id="D21804">
    <property type="protein sequence ID" value="BAA25177.1"/>
    <property type="molecule type" value="Genomic_DNA"/>
</dbReference>
<dbReference type="EMBL" id="CP001197">
    <property type="protein sequence ID" value="ACL08966.1"/>
    <property type="molecule type" value="Genomic_DNA"/>
</dbReference>
<dbReference type="PIR" id="C53203">
    <property type="entry name" value="C53203"/>
</dbReference>
<dbReference type="PDB" id="1AXJ">
    <property type="method" value="NMR"/>
    <property type="chains" value="A=1-122"/>
</dbReference>
<dbReference type="PDB" id="1FLM">
    <property type="method" value="X-ray"/>
    <property type="resolution" value="1.30 A"/>
    <property type="chains" value="A/B=1-122"/>
</dbReference>
<dbReference type="PDB" id="1WLI">
    <property type="method" value="X-ray"/>
    <property type="resolution" value="1.60 A"/>
    <property type="chains" value="A/B=1-122"/>
</dbReference>
<dbReference type="PDB" id="1WLK">
    <property type="method" value="X-ray"/>
    <property type="resolution" value="1.90 A"/>
    <property type="chains" value="A/B/C/D=1-122"/>
</dbReference>
<dbReference type="PDB" id="2E83">
    <property type="method" value="X-ray"/>
    <property type="resolution" value="1.52 A"/>
    <property type="chains" value="A/B=1-122"/>
</dbReference>
<dbReference type="PDB" id="3A20">
    <property type="method" value="X-ray"/>
    <property type="resolution" value="1.60 A"/>
    <property type="chains" value="A/B=1-122"/>
</dbReference>
<dbReference type="PDB" id="3A6Q">
    <property type="method" value="X-ray"/>
    <property type="resolution" value="1.40 A"/>
    <property type="chains" value="A/B=1-122"/>
</dbReference>
<dbReference type="PDB" id="3A6R">
    <property type="method" value="X-ray"/>
    <property type="resolution" value="1.20 A"/>
    <property type="chains" value="A/B/C/D=1-122"/>
</dbReference>
<dbReference type="PDB" id="3AMF">
    <property type="method" value="X-ray"/>
    <property type="resolution" value="1.60 A"/>
    <property type="chains" value="A/B=1-122"/>
</dbReference>
<dbReference type="PDB" id="3AWH">
    <property type="method" value="X-ray"/>
    <property type="resolution" value="1.60 A"/>
    <property type="chains" value="A/B=1-122"/>
</dbReference>
<dbReference type="PDB" id="3VY2">
    <property type="method" value="X-ray"/>
    <property type="resolution" value="1.60 A"/>
    <property type="chains" value="A/B=1-122"/>
</dbReference>
<dbReference type="PDB" id="3VY5">
    <property type="method" value="X-ray"/>
    <property type="resolution" value="1.40 A"/>
    <property type="chains" value="A/B=1-122"/>
</dbReference>
<dbReference type="PDB" id="3VYA">
    <property type="method" value="X-ray"/>
    <property type="resolution" value="2.40 A"/>
    <property type="chains" value="A=1-122"/>
</dbReference>
<dbReference type="PDBsum" id="1AXJ"/>
<dbReference type="PDBsum" id="1FLM"/>
<dbReference type="PDBsum" id="1WLI"/>
<dbReference type="PDBsum" id="1WLK"/>
<dbReference type="PDBsum" id="2E83"/>
<dbReference type="PDBsum" id="3A20"/>
<dbReference type="PDBsum" id="3A6Q"/>
<dbReference type="PDBsum" id="3A6R"/>
<dbReference type="PDBsum" id="3AMF"/>
<dbReference type="PDBsum" id="3AWH"/>
<dbReference type="PDBsum" id="3VY2"/>
<dbReference type="PDBsum" id="3VY5"/>
<dbReference type="PDBsum" id="3VYA"/>
<dbReference type="SMR" id="Q46604"/>
<dbReference type="STRING" id="883.DvMF_2023"/>
<dbReference type="DrugBank" id="DB03247">
    <property type="generic name" value="Flavin mononucleotide"/>
</dbReference>
<dbReference type="KEGG" id="dvm:DvMF_2023"/>
<dbReference type="eggNOG" id="COG3576">
    <property type="taxonomic scope" value="Bacteria"/>
</dbReference>
<dbReference type="HOGENOM" id="CLU_163878_0_0_7"/>
<dbReference type="OrthoDB" id="595289at2"/>
<dbReference type="EvolutionaryTrace" id="Q46604"/>
<dbReference type="PRO" id="PR:Q46604"/>
<dbReference type="GO" id="GO:0005737">
    <property type="term" value="C:cytoplasm"/>
    <property type="evidence" value="ECO:0007669"/>
    <property type="project" value="UniProtKB-SubCell"/>
</dbReference>
<dbReference type="Gene3D" id="2.30.110.10">
    <property type="entry name" value="Electron Transport, Fmn-binding Protein, Chain A"/>
    <property type="match status" value="1"/>
</dbReference>
<dbReference type="InterPro" id="IPR011576">
    <property type="entry name" value="Pyridox_Oxase_N"/>
</dbReference>
<dbReference type="InterPro" id="IPR012349">
    <property type="entry name" value="Split_barrel_FMN-bd"/>
</dbReference>
<dbReference type="Pfam" id="PF01243">
    <property type="entry name" value="PNPOx_N"/>
    <property type="match status" value="1"/>
</dbReference>
<dbReference type="SUPFAM" id="SSF50475">
    <property type="entry name" value="FMN-binding split barrel"/>
    <property type="match status" value="1"/>
</dbReference>